<accession>P31109</accession>
<accession>D6VPI8</accession>
<evidence type="ECO:0000255" key="1"/>
<evidence type="ECO:0000255" key="2">
    <source>
        <dbReference type="PROSITE-ProRule" id="PRU00290"/>
    </source>
</evidence>
<evidence type="ECO:0000256" key="3">
    <source>
        <dbReference type="SAM" id="MobiDB-lite"/>
    </source>
</evidence>
<evidence type="ECO:0000269" key="4">
    <source>
    </source>
</evidence>
<evidence type="ECO:0000269" key="5">
    <source>
    </source>
</evidence>
<evidence type="ECO:0000305" key="6"/>
<evidence type="ECO:0007829" key="7">
    <source>
        <dbReference type="PDB" id="3B5N"/>
    </source>
</evidence>
<name>SNC1_YEAST</name>
<keyword id="KW-0002">3D-structure</keyword>
<keyword id="KW-0175">Coiled coil</keyword>
<keyword id="KW-1017">Isopeptide bond</keyword>
<keyword id="KW-0449">Lipoprotein</keyword>
<keyword id="KW-0472">Membrane</keyword>
<keyword id="KW-0564">Palmitate</keyword>
<keyword id="KW-1185">Reference proteome</keyword>
<keyword id="KW-0812">Transmembrane</keyword>
<keyword id="KW-1133">Transmembrane helix</keyword>
<keyword id="KW-0832">Ubl conjugation</keyword>
<dbReference type="EMBL" id="M91157">
    <property type="protein sequence ID" value="AAA35069.1"/>
    <property type="molecule type" value="Genomic_DNA"/>
</dbReference>
<dbReference type="EMBL" id="U12980">
    <property type="protein sequence ID" value="AAC05002.1"/>
    <property type="molecule type" value="Genomic_DNA"/>
</dbReference>
<dbReference type="EMBL" id="BK006935">
    <property type="protein sequence ID" value="DAA06958.1"/>
    <property type="molecule type" value="Genomic_DNA"/>
</dbReference>
<dbReference type="PIR" id="S31250">
    <property type="entry name" value="S31250"/>
</dbReference>
<dbReference type="RefSeq" id="NP_009372.1">
    <property type="nucleotide sequence ID" value="NM_001178175.1"/>
</dbReference>
<dbReference type="PDB" id="3B5N">
    <property type="method" value="X-ray"/>
    <property type="resolution" value="1.60 A"/>
    <property type="chains" value="A/E/I=27-86"/>
</dbReference>
<dbReference type="PDBsum" id="3B5N"/>
<dbReference type="BMRB" id="P31109"/>
<dbReference type="SMR" id="P31109"/>
<dbReference type="BioGRID" id="31736">
    <property type="interactions" value="84"/>
</dbReference>
<dbReference type="ComplexPortal" id="CPX-1365">
    <property type="entry name" value="Vesicular SNARE complex SSO1-SEC9-SNC1"/>
</dbReference>
<dbReference type="ComplexPortal" id="CPX-1369">
    <property type="entry name" value="Vesicular SNARE complex SSO2-SEC9-SNC1"/>
</dbReference>
<dbReference type="ComplexPortal" id="CPX-5322">
    <property type="entry name" value="Endosomal SNARE complex TLG2-VTI1-TLG1-SNC1"/>
</dbReference>
<dbReference type="ComplexPortal" id="CPX-5423">
    <property type="entry name" value="Endosomal SNARE complex PEP12-VTI1-TLG1-SNC1"/>
</dbReference>
<dbReference type="ComplexPortal" id="CPX-5424">
    <property type="entry name" value="Endosomal SNARE complex PEP12-VTI1-SYN8-SNC1"/>
</dbReference>
<dbReference type="ComplexPortal" id="CPX-5464">
    <property type="entry name" value="Vesicular SNARE complex SSO1-SPO20-SNC1"/>
</dbReference>
<dbReference type="DIP" id="DIP-2495N"/>
<dbReference type="FunCoup" id="P31109">
    <property type="interactions" value="331"/>
</dbReference>
<dbReference type="IntAct" id="P31109">
    <property type="interactions" value="7"/>
</dbReference>
<dbReference type="STRING" id="4932.YAL030W"/>
<dbReference type="iPTMnet" id="P31109"/>
<dbReference type="SwissPalm" id="P31109"/>
<dbReference type="PaxDb" id="4932-YAL030W"/>
<dbReference type="PeptideAtlas" id="P31109"/>
<dbReference type="EnsemblFungi" id="YAL030W_mRNA">
    <property type="protein sequence ID" value="YAL030W"/>
    <property type="gene ID" value="YAL030W"/>
</dbReference>
<dbReference type="GeneID" id="851203"/>
<dbReference type="KEGG" id="sce:YAL030W"/>
<dbReference type="AGR" id="SGD:S000000028"/>
<dbReference type="SGD" id="S000000028">
    <property type="gene designation" value="SNC1"/>
</dbReference>
<dbReference type="VEuPathDB" id="FungiDB:YAL030W"/>
<dbReference type="eggNOG" id="KOG0860">
    <property type="taxonomic scope" value="Eukaryota"/>
</dbReference>
<dbReference type="GeneTree" id="ENSGT00940000155005"/>
<dbReference type="HOGENOM" id="CLU_064620_2_1_1"/>
<dbReference type="InParanoid" id="P31109"/>
<dbReference type="OMA" id="VRKKMWW"/>
<dbReference type="OrthoDB" id="190375at2759"/>
<dbReference type="BioCyc" id="YEAST:G3O-28841-MONOMER"/>
<dbReference type="BioGRID-ORCS" id="851203">
    <property type="hits" value="1 hit in 10 CRISPR screens"/>
</dbReference>
<dbReference type="EvolutionaryTrace" id="P31109"/>
<dbReference type="PRO" id="PR:P31109"/>
<dbReference type="Proteomes" id="UP000002311">
    <property type="component" value="Chromosome I"/>
</dbReference>
<dbReference type="RNAct" id="P31109">
    <property type="molecule type" value="protein"/>
</dbReference>
<dbReference type="GO" id="GO:0071944">
    <property type="term" value="C:cell periphery"/>
    <property type="evidence" value="ECO:0007005"/>
    <property type="project" value="SGD"/>
</dbReference>
<dbReference type="GO" id="GO:0005933">
    <property type="term" value="C:cellular bud"/>
    <property type="evidence" value="ECO:0007005"/>
    <property type="project" value="SGD"/>
</dbReference>
<dbReference type="GO" id="GO:0005935">
    <property type="term" value="C:cellular bud neck"/>
    <property type="evidence" value="ECO:0000314"/>
    <property type="project" value="SGD"/>
</dbReference>
<dbReference type="GO" id="GO:0005829">
    <property type="term" value="C:cytosol"/>
    <property type="evidence" value="ECO:0007669"/>
    <property type="project" value="GOC"/>
</dbReference>
<dbReference type="GO" id="GO:0005768">
    <property type="term" value="C:endosome"/>
    <property type="evidence" value="ECO:0000314"/>
    <property type="project" value="SGD"/>
</dbReference>
<dbReference type="GO" id="GO:0010008">
    <property type="term" value="C:endosome membrane"/>
    <property type="evidence" value="ECO:0000303"/>
    <property type="project" value="ComplexPortal"/>
</dbReference>
<dbReference type="GO" id="GO:0000139">
    <property type="term" value="C:Golgi membrane"/>
    <property type="evidence" value="ECO:0000303"/>
    <property type="project" value="ComplexPortal"/>
</dbReference>
<dbReference type="GO" id="GO:0005886">
    <property type="term" value="C:plasma membrane"/>
    <property type="evidence" value="ECO:0000314"/>
    <property type="project" value="SGD"/>
</dbReference>
<dbReference type="GO" id="GO:0005628">
    <property type="term" value="C:prospore membrane"/>
    <property type="evidence" value="ECO:0000303"/>
    <property type="project" value="ComplexPortal"/>
</dbReference>
<dbReference type="GO" id="GO:0031201">
    <property type="term" value="C:SNARE complex"/>
    <property type="evidence" value="ECO:0000314"/>
    <property type="project" value="ComplexPortal"/>
</dbReference>
<dbReference type="GO" id="GO:0005802">
    <property type="term" value="C:trans-Golgi network"/>
    <property type="evidence" value="ECO:0000314"/>
    <property type="project" value="SGD"/>
</dbReference>
<dbReference type="GO" id="GO:0030658">
    <property type="term" value="C:transport vesicle membrane"/>
    <property type="evidence" value="ECO:0000314"/>
    <property type="project" value="SGD"/>
</dbReference>
<dbReference type="GO" id="GO:0060090">
    <property type="term" value="F:molecular adaptor activity"/>
    <property type="evidence" value="ECO:0000269"/>
    <property type="project" value="DisProt"/>
</dbReference>
<dbReference type="GO" id="GO:0005484">
    <property type="term" value="F:SNAP receptor activity"/>
    <property type="evidence" value="ECO:0000314"/>
    <property type="project" value="SGD"/>
</dbReference>
<dbReference type="GO" id="GO:0000149">
    <property type="term" value="F:SNARE binding"/>
    <property type="evidence" value="ECO:0000353"/>
    <property type="project" value="CAFA"/>
</dbReference>
<dbReference type="GO" id="GO:0019905">
    <property type="term" value="F:syntaxin binding"/>
    <property type="evidence" value="ECO:0000318"/>
    <property type="project" value="GO_Central"/>
</dbReference>
<dbReference type="GO" id="GO:0031321">
    <property type="term" value="P:ascospore-type prospore assembly"/>
    <property type="evidence" value="ECO:0000303"/>
    <property type="project" value="ComplexPortal"/>
</dbReference>
<dbReference type="GO" id="GO:0006897">
    <property type="term" value="P:endocytosis"/>
    <property type="evidence" value="ECO:0000315"/>
    <property type="project" value="SGD"/>
</dbReference>
<dbReference type="GO" id="GO:0006887">
    <property type="term" value="P:exocytosis"/>
    <property type="evidence" value="ECO:0000315"/>
    <property type="project" value="SGD"/>
</dbReference>
<dbReference type="GO" id="GO:0006895">
    <property type="term" value="P:Golgi to endosome transport"/>
    <property type="evidence" value="ECO:0000303"/>
    <property type="project" value="ComplexPortal"/>
</dbReference>
<dbReference type="GO" id="GO:0006893">
    <property type="term" value="P:Golgi to plasma membrane transport"/>
    <property type="evidence" value="ECO:0000315"/>
    <property type="project" value="SGD"/>
</dbReference>
<dbReference type="GO" id="GO:0048210">
    <property type="term" value="P:Golgi vesicle fusion to target membrane"/>
    <property type="evidence" value="ECO:0000303"/>
    <property type="project" value="ComplexPortal"/>
</dbReference>
<dbReference type="GO" id="GO:0006886">
    <property type="term" value="P:intracellular protein transport"/>
    <property type="evidence" value="ECO:0000303"/>
    <property type="project" value="ComplexPortal"/>
</dbReference>
<dbReference type="GO" id="GO:0042147">
    <property type="term" value="P:retrograde transport, endosome to Golgi"/>
    <property type="evidence" value="ECO:0000303"/>
    <property type="project" value="ComplexPortal"/>
</dbReference>
<dbReference type="GO" id="GO:0035493">
    <property type="term" value="P:SNARE complex assembly"/>
    <property type="evidence" value="ECO:0000315"/>
    <property type="project" value="CAFA"/>
</dbReference>
<dbReference type="GO" id="GO:0043934">
    <property type="term" value="P:sporulation"/>
    <property type="evidence" value="ECO:0000250"/>
    <property type="project" value="ComplexPortal"/>
</dbReference>
<dbReference type="GO" id="GO:0006906">
    <property type="term" value="P:vesicle fusion"/>
    <property type="evidence" value="ECO:0000314"/>
    <property type="project" value="ComplexPortal"/>
</dbReference>
<dbReference type="GO" id="GO:0099500">
    <property type="term" value="P:vesicle fusion to plasma membrane"/>
    <property type="evidence" value="ECO:0000303"/>
    <property type="project" value="ComplexPortal"/>
</dbReference>
<dbReference type="GO" id="GO:0048280">
    <property type="term" value="P:vesicle fusion with Golgi apparatus"/>
    <property type="evidence" value="ECO:0000303"/>
    <property type="project" value="ComplexPortal"/>
</dbReference>
<dbReference type="CDD" id="cd15874">
    <property type="entry name" value="R-SNARE_Snc1"/>
    <property type="match status" value="1"/>
</dbReference>
<dbReference type="DisProt" id="DP00113"/>
<dbReference type="FunFam" id="1.20.5.110:FF:000063">
    <property type="entry name" value="Synaptobrevin 1"/>
    <property type="match status" value="1"/>
</dbReference>
<dbReference type="Gene3D" id="1.20.5.110">
    <property type="match status" value="1"/>
</dbReference>
<dbReference type="InterPro" id="IPR001388">
    <property type="entry name" value="Synaptobrevin-like"/>
</dbReference>
<dbReference type="InterPro" id="IPR016444">
    <property type="entry name" value="Synaptobrevin/VAMP"/>
</dbReference>
<dbReference type="InterPro" id="IPR042855">
    <property type="entry name" value="V_SNARE_CC"/>
</dbReference>
<dbReference type="PANTHER" id="PTHR45701">
    <property type="entry name" value="SYNAPTOBREVIN FAMILY MEMBER"/>
    <property type="match status" value="1"/>
</dbReference>
<dbReference type="Pfam" id="PF00957">
    <property type="entry name" value="Synaptobrevin"/>
    <property type="match status" value="1"/>
</dbReference>
<dbReference type="PIRSF" id="PIRSF005409">
    <property type="entry name" value="Synaptobrevin_euk"/>
    <property type="match status" value="1"/>
</dbReference>
<dbReference type="PRINTS" id="PR00219">
    <property type="entry name" value="SYNAPTOBREVN"/>
</dbReference>
<dbReference type="SUPFAM" id="SSF58038">
    <property type="entry name" value="SNARE fusion complex"/>
    <property type="match status" value="1"/>
</dbReference>
<dbReference type="PROSITE" id="PS00417">
    <property type="entry name" value="SYNAPTOBREVIN"/>
    <property type="match status" value="1"/>
</dbReference>
<dbReference type="PROSITE" id="PS50892">
    <property type="entry name" value="V_SNARE"/>
    <property type="match status" value="1"/>
</dbReference>
<feature type="chain" id="PRO_0000206744" description="Synaptobrevin homolog 1">
    <location>
        <begin position="1"/>
        <end position="117"/>
    </location>
</feature>
<feature type="topological domain" description="Cytoplasmic" evidence="1">
    <location>
        <begin position="1"/>
        <end position="94"/>
    </location>
</feature>
<feature type="transmembrane region" description="Helical; Anchor for type IV membrane protein" evidence="1">
    <location>
        <begin position="95"/>
        <end position="111"/>
    </location>
</feature>
<feature type="topological domain" description="Vesicular" evidence="1">
    <location>
        <begin position="112"/>
        <end position="117"/>
    </location>
</feature>
<feature type="domain" description="v-SNARE coiled-coil homology" evidence="2">
    <location>
        <begin position="28"/>
        <end position="88"/>
    </location>
</feature>
<feature type="region of interest" description="Disordered" evidence="3">
    <location>
        <begin position="1"/>
        <end position="30"/>
    </location>
</feature>
<feature type="lipid moiety-binding region" description="S-palmitoyl cysteine" evidence="5">
    <location>
        <position position="95"/>
    </location>
</feature>
<feature type="cross-link" description="Glycyl lysine isopeptide (Lys-Gly) (interchain with G-Cter in ubiquitin)" evidence="4">
    <location>
        <position position="63"/>
    </location>
</feature>
<feature type="helix" evidence="7">
    <location>
        <begin position="27"/>
        <end position="85"/>
    </location>
</feature>
<comment type="function">
    <text>SNC1 and SNC2 are vesicle-targeting proteins essential for normal secretory traffic between the Golgi and the plasma membrane. They may also be involved in vesicle fusion.</text>
</comment>
<comment type="subcellular location">
    <subcellularLocation>
        <location>Endomembrane system</location>
        <topology>Single-pass type IV membrane protein</topology>
    </subcellularLocation>
    <text evidence="6">Post-Golgi vesicle membrane.</text>
</comment>
<comment type="PTM">
    <text evidence="5">Palmitoylated by SWF1.</text>
</comment>
<comment type="similarity">
    <text evidence="6">Belongs to the synaptobrevin family.</text>
</comment>
<reference key="1">
    <citation type="journal article" date="1992" name="Proc. Natl. Acad. Sci. U.S.A.">
        <title>SNC1, a yeast homolog of the synaptic vesicle-associated membrane protein/synaptobrevin gene family: genetic interactions with the RAS and CAP genes.</title>
        <authorList>
            <person name="Gerst J.E."/>
            <person name="Rodgers L."/>
            <person name="Riggs M."/>
            <person name="Wigler M."/>
        </authorList>
    </citation>
    <scope>NUCLEOTIDE SEQUENCE [GENOMIC DNA]</scope>
</reference>
<reference key="2">
    <citation type="journal article" date="1992" name="Proc. Natl. Acad. Sci. U.S.A.">
        <authorList>
            <person name="Gerst J.E."/>
            <person name="Rodgers L."/>
            <person name="Riggs M."/>
            <person name="Wigler M."/>
        </authorList>
    </citation>
    <scope>ERRATUM OF PUBMED:1316605</scope>
</reference>
<reference key="3">
    <citation type="journal article" date="1995" name="Proc. Natl. Acad. Sci. U.S.A.">
        <title>The nucleotide sequence of chromosome I from Saccharomyces cerevisiae.</title>
        <authorList>
            <person name="Bussey H."/>
            <person name="Kaback D.B."/>
            <person name="Zhong W.-W."/>
            <person name="Vo D.H."/>
            <person name="Clark M.W."/>
            <person name="Fortin N."/>
            <person name="Hall J."/>
            <person name="Ouellette B.F.F."/>
            <person name="Keng T."/>
            <person name="Barton A.B."/>
            <person name="Su Y."/>
            <person name="Davies C.J."/>
            <person name="Storms R.K."/>
        </authorList>
    </citation>
    <scope>NUCLEOTIDE SEQUENCE [LARGE SCALE GENOMIC DNA]</scope>
    <source>
        <strain>ATCC 204508 / S288c</strain>
    </source>
</reference>
<reference key="4">
    <citation type="journal article" date="2014" name="G3 (Bethesda)">
        <title>The reference genome sequence of Saccharomyces cerevisiae: Then and now.</title>
        <authorList>
            <person name="Engel S.R."/>
            <person name="Dietrich F.S."/>
            <person name="Fisk D.G."/>
            <person name="Binkley G."/>
            <person name="Balakrishnan R."/>
            <person name="Costanzo M.C."/>
            <person name="Dwight S.S."/>
            <person name="Hitz B.C."/>
            <person name="Karra K."/>
            <person name="Nash R.S."/>
            <person name="Weng S."/>
            <person name="Wong E.D."/>
            <person name="Lloyd P."/>
            <person name="Skrzypek M.S."/>
            <person name="Miyasato S.R."/>
            <person name="Simison M."/>
            <person name="Cherry J.M."/>
        </authorList>
    </citation>
    <scope>GENOME REANNOTATION</scope>
    <source>
        <strain>ATCC 204508 / S288c</strain>
    </source>
</reference>
<reference key="5">
    <citation type="journal article" date="2003" name="Nat. Biotechnol.">
        <title>A proteomics approach to understanding protein ubiquitination.</title>
        <authorList>
            <person name="Peng J."/>
            <person name="Schwartz D."/>
            <person name="Elias J.E."/>
            <person name="Thoreen C.C."/>
            <person name="Cheng D."/>
            <person name="Marsischky G."/>
            <person name="Roelofs J."/>
            <person name="Finley D."/>
            <person name="Gygi S.P."/>
        </authorList>
    </citation>
    <scope>UBIQUITINATION [LARGE SCALE ANALYSIS] AT LYS-63</scope>
    <scope>IDENTIFICATION BY MASS SPECTROMETRY</scope>
    <source>
        <strain>SUB592</strain>
    </source>
</reference>
<reference key="6">
    <citation type="journal article" date="2005" name="EMBO J.">
        <title>Swf1-dependent palmitoylation of the SNARE Tlg1 prevents its ubiquitination and degradation.</title>
        <authorList>
            <person name="Valdez-Taubas J."/>
            <person name="Pelham H.R.B."/>
        </authorList>
    </citation>
    <scope>PALMITOYLATION AT CYS-95</scope>
</reference>
<reference key="7">
    <citation type="journal article" date="2009" name="Science">
        <title>Global analysis of Cdk1 substrate phosphorylation sites provides insights into evolution.</title>
        <authorList>
            <person name="Holt L.J."/>
            <person name="Tuch B.B."/>
            <person name="Villen J."/>
            <person name="Johnson A.D."/>
            <person name="Gygi S.P."/>
            <person name="Morgan D.O."/>
        </authorList>
    </citation>
    <scope>IDENTIFICATION BY MASS SPECTROMETRY [LARGE SCALE ANALYSIS]</scope>
</reference>
<organism>
    <name type="scientific">Saccharomyces cerevisiae (strain ATCC 204508 / S288c)</name>
    <name type="common">Baker's yeast</name>
    <dbReference type="NCBI Taxonomy" id="559292"/>
    <lineage>
        <taxon>Eukaryota</taxon>
        <taxon>Fungi</taxon>
        <taxon>Dikarya</taxon>
        <taxon>Ascomycota</taxon>
        <taxon>Saccharomycotina</taxon>
        <taxon>Saccharomycetes</taxon>
        <taxon>Saccharomycetales</taxon>
        <taxon>Saccharomycetaceae</taxon>
        <taxon>Saccharomyces</taxon>
    </lineage>
</organism>
<sequence length="117" mass="13201">MSSSTPFDPYALSEHDEERPQNVQSKSRTAELQAEIDDTVGIMRDNINKVAERGERLTSIEDKADNLAVSAQGFKRGANRVRKAMWYKDLKMKMCLALVIIILLVVIIVPIAVHFSR</sequence>
<protein>
    <recommendedName>
        <fullName>Synaptobrevin homolog 1</fullName>
    </recommendedName>
</protein>
<gene>
    <name type="primary">SNC1</name>
    <name type="ordered locus">YAL030W</name>
</gene>
<proteinExistence type="evidence at protein level"/>